<proteinExistence type="inferred from homology"/>
<accession>C6DKY6</accession>
<name>BETI_PECCP</name>
<sequence length="195" mass="21912">MPKVGMQPIRRQQLIEATLAAINDVGMHDASIVQIARRAGVSNGIISHYFRDKNGLLEATMRYLISHLGLAVKSRLLSLTENTPRARLRAIVQGNFDDSQTNSAAMKTWLAFWASSLHSPMLHRLQQVNDRRLYSNLCIEFSHCLPKDNARIAAKGLAGLIDGLWLRSALSHDAFNREEALSIAYDYIEQQLTRT</sequence>
<feature type="chain" id="PRO_1000212896" description="HTH-type transcriptional regulator BetI">
    <location>
        <begin position="1"/>
        <end position="195"/>
    </location>
</feature>
<feature type="domain" description="HTH tetR-type" evidence="2">
    <location>
        <begin position="8"/>
        <end position="68"/>
    </location>
</feature>
<feature type="DNA-binding region" description="H-T-H motif" evidence="2">
    <location>
        <begin position="31"/>
        <end position="50"/>
    </location>
</feature>
<reference key="1">
    <citation type="submission" date="2009-07" db="EMBL/GenBank/DDBJ databases">
        <title>Complete sequence of Pectobacterium carotovorum subsp. carotovorum PC1.</title>
        <authorList>
            <consortium name="US DOE Joint Genome Institute"/>
            <person name="Lucas S."/>
            <person name="Copeland A."/>
            <person name="Lapidus A."/>
            <person name="Glavina del Rio T."/>
            <person name="Tice H."/>
            <person name="Bruce D."/>
            <person name="Goodwin L."/>
            <person name="Pitluck S."/>
            <person name="Munk A.C."/>
            <person name="Brettin T."/>
            <person name="Detter J.C."/>
            <person name="Han C."/>
            <person name="Tapia R."/>
            <person name="Larimer F."/>
            <person name="Land M."/>
            <person name="Hauser L."/>
            <person name="Kyrpides N."/>
            <person name="Mikhailova N."/>
            <person name="Balakrishnan V."/>
            <person name="Glasner J."/>
            <person name="Perna N.T."/>
        </authorList>
    </citation>
    <scope>NUCLEOTIDE SEQUENCE [LARGE SCALE GENOMIC DNA]</scope>
    <source>
        <strain>PC1</strain>
    </source>
</reference>
<keyword id="KW-0238">DNA-binding</keyword>
<keyword id="KW-0678">Repressor</keyword>
<keyword id="KW-0804">Transcription</keyword>
<keyword id="KW-0805">Transcription regulation</keyword>
<dbReference type="EMBL" id="CP001657">
    <property type="protein sequence ID" value="ACT13587.1"/>
    <property type="molecule type" value="Genomic_DNA"/>
</dbReference>
<dbReference type="RefSeq" id="WP_015840761.1">
    <property type="nucleotide sequence ID" value="NC_012917.1"/>
</dbReference>
<dbReference type="SMR" id="C6DKY6"/>
<dbReference type="STRING" id="561230.PC1_2556"/>
<dbReference type="KEGG" id="pct:PC1_2556"/>
<dbReference type="eggNOG" id="COG1309">
    <property type="taxonomic scope" value="Bacteria"/>
</dbReference>
<dbReference type="HOGENOM" id="CLU_069356_15_4_6"/>
<dbReference type="OrthoDB" id="7618612at2"/>
<dbReference type="UniPathway" id="UPA00529"/>
<dbReference type="PHI-base" id="PHI:10583"/>
<dbReference type="Proteomes" id="UP000002736">
    <property type="component" value="Chromosome"/>
</dbReference>
<dbReference type="GO" id="GO:0003700">
    <property type="term" value="F:DNA-binding transcription factor activity"/>
    <property type="evidence" value="ECO:0007669"/>
    <property type="project" value="UniProtKB-UniRule"/>
</dbReference>
<dbReference type="GO" id="GO:0000976">
    <property type="term" value="F:transcription cis-regulatory region binding"/>
    <property type="evidence" value="ECO:0007669"/>
    <property type="project" value="TreeGrafter"/>
</dbReference>
<dbReference type="GO" id="GO:0019285">
    <property type="term" value="P:glycine betaine biosynthetic process from choline"/>
    <property type="evidence" value="ECO:0007669"/>
    <property type="project" value="UniProtKB-UniRule"/>
</dbReference>
<dbReference type="GO" id="GO:0045892">
    <property type="term" value="P:negative regulation of DNA-templated transcription"/>
    <property type="evidence" value="ECO:0007669"/>
    <property type="project" value="UniProtKB-UniRule"/>
</dbReference>
<dbReference type="Gene3D" id="1.10.357.10">
    <property type="entry name" value="Tetracycline Repressor, domain 2"/>
    <property type="match status" value="1"/>
</dbReference>
<dbReference type="HAMAP" id="MF_00768">
    <property type="entry name" value="HTH_type_BetI"/>
    <property type="match status" value="1"/>
</dbReference>
<dbReference type="InterPro" id="IPR039538">
    <property type="entry name" value="BetI_C"/>
</dbReference>
<dbReference type="InterPro" id="IPR023772">
    <property type="entry name" value="DNA-bd_HTH_TetR-type_CS"/>
</dbReference>
<dbReference type="InterPro" id="IPR009057">
    <property type="entry name" value="Homeodomain-like_sf"/>
</dbReference>
<dbReference type="InterPro" id="IPR050109">
    <property type="entry name" value="HTH-type_TetR-like_transc_reg"/>
</dbReference>
<dbReference type="InterPro" id="IPR001647">
    <property type="entry name" value="HTH_TetR"/>
</dbReference>
<dbReference type="InterPro" id="IPR036271">
    <property type="entry name" value="Tet_transcr_reg_TetR-rel_C_sf"/>
</dbReference>
<dbReference type="InterPro" id="IPR017757">
    <property type="entry name" value="Tscrpt_rep_BetI"/>
</dbReference>
<dbReference type="NCBIfam" id="TIGR03384">
    <property type="entry name" value="betaine_BetI"/>
    <property type="match status" value="1"/>
</dbReference>
<dbReference type="NCBIfam" id="NF001978">
    <property type="entry name" value="PRK00767.1"/>
    <property type="match status" value="1"/>
</dbReference>
<dbReference type="PANTHER" id="PTHR30055:SF234">
    <property type="entry name" value="HTH-TYPE TRANSCRIPTIONAL REGULATOR BETI"/>
    <property type="match status" value="1"/>
</dbReference>
<dbReference type="PANTHER" id="PTHR30055">
    <property type="entry name" value="HTH-TYPE TRANSCRIPTIONAL REGULATOR RUTR"/>
    <property type="match status" value="1"/>
</dbReference>
<dbReference type="Pfam" id="PF13977">
    <property type="entry name" value="TetR_C_6"/>
    <property type="match status" value="1"/>
</dbReference>
<dbReference type="Pfam" id="PF00440">
    <property type="entry name" value="TetR_N"/>
    <property type="match status" value="1"/>
</dbReference>
<dbReference type="PRINTS" id="PR00455">
    <property type="entry name" value="HTHTETR"/>
</dbReference>
<dbReference type="SUPFAM" id="SSF46689">
    <property type="entry name" value="Homeodomain-like"/>
    <property type="match status" value="1"/>
</dbReference>
<dbReference type="SUPFAM" id="SSF48498">
    <property type="entry name" value="Tetracyclin repressor-like, C-terminal domain"/>
    <property type="match status" value="1"/>
</dbReference>
<dbReference type="PROSITE" id="PS01081">
    <property type="entry name" value="HTH_TETR_1"/>
    <property type="match status" value="1"/>
</dbReference>
<dbReference type="PROSITE" id="PS50977">
    <property type="entry name" value="HTH_TETR_2"/>
    <property type="match status" value="1"/>
</dbReference>
<comment type="function">
    <text evidence="1">Repressor involved in the biosynthesis of the osmoprotectant glycine betaine. It represses transcription of the choline transporter BetT and the genes of BetAB involved in the synthesis of glycine betaine (By similarity).</text>
</comment>
<comment type="pathway">
    <text>Amine and polyamine biosynthesis; betaine biosynthesis via choline pathway [regulation].</text>
</comment>
<protein>
    <recommendedName>
        <fullName evidence="2">HTH-type transcriptional regulator BetI</fullName>
    </recommendedName>
</protein>
<gene>
    <name evidence="2" type="primary">betI</name>
    <name type="ordered locus">PC1_2556</name>
</gene>
<organism>
    <name type="scientific">Pectobacterium carotovorum subsp. carotovorum (strain PC1)</name>
    <dbReference type="NCBI Taxonomy" id="561230"/>
    <lineage>
        <taxon>Bacteria</taxon>
        <taxon>Pseudomonadati</taxon>
        <taxon>Pseudomonadota</taxon>
        <taxon>Gammaproteobacteria</taxon>
        <taxon>Enterobacterales</taxon>
        <taxon>Pectobacteriaceae</taxon>
        <taxon>Pectobacterium</taxon>
    </lineage>
</organism>
<evidence type="ECO:0000250" key="1"/>
<evidence type="ECO:0000255" key="2">
    <source>
        <dbReference type="HAMAP-Rule" id="MF_00768"/>
    </source>
</evidence>